<sequence>MSLEIVILAAGQGTRMRSALPKVLHPIAGKPMLGHVIDCARQLQPERIHVVIGHGADLVRERMAADDLNFVLQAEQLGTGHAVAQALPFLSADQVLILYGDVPLIQLDTLQRLLAQVTPDQLSLLTVDMLDPTGYGRIVRDDQGAVQAIVEHKDATPAQRQIGEINTGILAVPGKRLADWLGRLSNDNAQGEYYLTDVIAMAVGDGLVVASAQPLDAMEVQGVNDRMQQAQLERHYQRLRAEELMRQGVTLLDPQRLDVRGEISVGRDVLIDVNVVLEGRVVIEDDVHIGPNCVIRDSVLRRGAVIKANSHLEGAELGEGSDAGPFARLRPGSVLGARAHVGNFVELKNARLGEGSKAGHLSYLGDAELGANCNIGAGTITCNYDGANKFRTELGDDVFIGSNNSLVAPLKIGDGATTAAGSTITHEVPAKNLAFGRARQKNLENWKRPEKIKK</sequence>
<protein>
    <recommendedName>
        <fullName evidence="1">Bifunctional protein GlmU</fullName>
    </recommendedName>
    <domain>
        <recommendedName>
            <fullName evidence="1">UDP-N-acetylglucosamine pyrophosphorylase</fullName>
            <ecNumber evidence="1">2.7.7.23</ecNumber>
        </recommendedName>
        <alternativeName>
            <fullName evidence="1">N-acetylglucosamine-1-phosphate uridyltransferase</fullName>
        </alternativeName>
    </domain>
    <domain>
        <recommendedName>
            <fullName evidence="1">Glucosamine-1-phosphate N-acetyltransferase</fullName>
            <ecNumber evidence="1">2.3.1.157</ecNumber>
        </recommendedName>
    </domain>
</protein>
<name>GLMU_PSEAB</name>
<feature type="chain" id="PRO_1000056185" description="Bifunctional protein GlmU">
    <location>
        <begin position="1"/>
        <end position="454"/>
    </location>
</feature>
<feature type="region of interest" description="Pyrophosphorylase" evidence="1">
    <location>
        <begin position="1"/>
        <end position="226"/>
    </location>
</feature>
<feature type="region of interest" description="Linker" evidence="1">
    <location>
        <begin position="227"/>
        <end position="247"/>
    </location>
</feature>
<feature type="region of interest" description="N-acetyltransferase" evidence="1">
    <location>
        <begin position="248"/>
        <end position="454"/>
    </location>
</feature>
<feature type="active site" description="Proton acceptor" evidence="1">
    <location>
        <position position="360"/>
    </location>
</feature>
<feature type="binding site" evidence="1">
    <location>
        <begin position="8"/>
        <end position="11"/>
    </location>
    <ligand>
        <name>UDP-N-acetyl-alpha-D-glucosamine</name>
        <dbReference type="ChEBI" id="CHEBI:57705"/>
    </ligand>
</feature>
<feature type="binding site" evidence="1">
    <location>
        <position position="22"/>
    </location>
    <ligand>
        <name>UDP-N-acetyl-alpha-D-glucosamine</name>
        <dbReference type="ChEBI" id="CHEBI:57705"/>
    </ligand>
</feature>
<feature type="binding site" evidence="1">
    <location>
        <position position="73"/>
    </location>
    <ligand>
        <name>UDP-N-acetyl-alpha-D-glucosamine</name>
        <dbReference type="ChEBI" id="CHEBI:57705"/>
    </ligand>
</feature>
<feature type="binding site" evidence="1">
    <location>
        <begin position="78"/>
        <end position="79"/>
    </location>
    <ligand>
        <name>UDP-N-acetyl-alpha-D-glucosamine</name>
        <dbReference type="ChEBI" id="CHEBI:57705"/>
    </ligand>
</feature>
<feature type="binding site" evidence="1">
    <location>
        <begin position="99"/>
        <end position="101"/>
    </location>
    <ligand>
        <name>UDP-N-acetyl-alpha-D-glucosamine</name>
        <dbReference type="ChEBI" id="CHEBI:57705"/>
    </ligand>
</feature>
<feature type="binding site" evidence="1">
    <location>
        <position position="101"/>
    </location>
    <ligand>
        <name>Mg(2+)</name>
        <dbReference type="ChEBI" id="CHEBI:18420"/>
    </ligand>
</feature>
<feature type="binding site" evidence="1">
    <location>
        <position position="136"/>
    </location>
    <ligand>
        <name>UDP-N-acetyl-alpha-D-glucosamine</name>
        <dbReference type="ChEBI" id="CHEBI:57705"/>
    </ligand>
</feature>
<feature type="binding site" evidence="1">
    <location>
        <position position="151"/>
    </location>
    <ligand>
        <name>UDP-N-acetyl-alpha-D-glucosamine</name>
        <dbReference type="ChEBI" id="CHEBI:57705"/>
    </ligand>
</feature>
<feature type="binding site" evidence="1">
    <location>
        <position position="166"/>
    </location>
    <ligand>
        <name>UDP-N-acetyl-alpha-D-glucosamine</name>
        <dbReference type="ChEBI" id="CHEBI:57705"/>
    </ligand>
</feature>
<feature type="binding site" evidence="1">
    <location>
        <position position="224"/>
    </location>
    <ligand>
        <name>Mg(2+)</name>
        <dbReference type="ChEBI" id="CHEBI:18420"/>
    </ligand>
</feature>
<feature type="binding site" evidence="1">
    <location>
        <position position="224"/>
    </location>
    <ligand>
        <name>UDP-N-acetyl-alpha-D-glucosamine</name>
        <dbReference type="ChEBI" id="CHEBI:57705"/>
    </ligand>
</feature>
<feature type="binding site" evidence="1">
    <location>
        <position position="330"/>
    </location>
    <ligand>
        <name>UDP-N-acetyl-alpha-D-glucosamine</name>
        <dbReference type="ChEBI" id="CHEBI:57705"/>
    </ligand>
</feature>
<feature type="binding site" evidence="1">
    <location>
        <position position="348"/>
    </location>
    <ligand>
        <name>UDP-N-acetyl-alpha-D-glucosamine</name>
        <dbReference type="ChEBI" id="CHEBI:57705"/>
    </ligand>
</feature>
<feature type="binding site" evidence="1">
    <location>
        <position position="363"/>
    </location>
    <ligand>
        <name>UDP-N-acetyl-alpha-D-glucosamine</name>
        <dbReference type="ChEBI" id="CHEBI:57705"/>
    </ligand>
</feature>
<feature type="binding site" evidence="1">
    <location>
        <position position="374"/>
    </location>
    <ligand>
        <name>UDP-N-acetyl-alpha-D-glucosamine</name>
        <dbReference type="ChEBI" id="CHEBI:57705"/>
    </ligand>
</feature>
<feature type="binding site" evidence="1">
    <location>
        <position position="377"/>
    </location>
    <ligand>
        <name>acetyl-CoA</name>
        <dbReference type="ChEBI" id="CHEBI:57288"/>
    </ligand>
</feature>
<feature type="binding site" evidence="1">
    <location>
        <begin position="383"/>
        <end position="384"/>
    </location>
    <ligand>
        <name>acetyl-CoA</name>
        <dbReference type="ChEBI" id="CHEBI:57288"/>
    </ligand>
</feature>
<feature type="binding site" evidence="1">
    <location>
        <position position="402"/>
    </location>
    <ligand>
        <name>acetyl-CoA</name>
        <dbReference type="ChEBI" id="CHEBI:57288"/>
    </ligand>
</feature>
<feature type="binding site" evidence="1">
    <location>
        <position position="420"/>
    </location>
    <ligand>
        <name>acetyl-CoA</name>
        <dbReference type="ChEBI" id="CHEBI:57288"/>
    </ligand>
</feature>
<feature type="binding site" evidence="1">
    <location>
        <position position="437"/>
    </location>
    <ligand>
        <name>acetyl-CoA</name>
        <dbReference type="ChEBI" id="CHEBI:57288"/>
    </ligand>
</feature>
<accession>Q02DF6</accession>
<dbReference type="EC" id="2.7.7.23" evidence="1"/>
<dbReference type="EC" id="2.3.1.157" evidence="1"/>
<dbReference type="EMBL" id="CP000438">
    <property type="protein sequence ID" value="ABJ14939.1"/>
    <property type="molecule type" value="Genomic_DNA"/>
</dbReference>
<dbReference type="RefSeq" id="WP_003109147.1">
    <property type="nucleotide sequence ID" value="NZ_CP034244.1"/>
</dbReference>
<dbReference type="SMR" id="Q02DF6"/>
<dbReference type="KEGG" id="pau:PA14_73220"/>
<dbReference type="PseudoCAP" id="PA14_73220"/>
<dbReference type="HOGENOM" id="CLU_029499_15_2_6"/>
<dbReference type="BioCyc" id="PAER208963:G1G74-6159-MONOMER"/>
<dbReference type="UniPathway" id="UPA00113">
    <property type="reaction ID" value="UER00532"/>
</dbReference>
<dbReference type="UniPathway" id="UPA00113">
    <property type="reaction ID" value="UER00533"/>
</dbReference>
<dbReference type="UniPathway" id="UPA00973"/>
<dbReference type="Proteomes" id="UP000000653">
    <property type="component" value="Chromosome"/>
</dbReference>
<dbReference type="GO" id="GO:0005737">
    <property type="term" value="C:cytoplasm"/>
    <property type="evidence" value="ECO:0007669"/>
    <property type="project" value="UniProtKB-SubCell"/>
</dbReference>
<dbReference type="GO" id="GO:0016020">
    <property type="term" value="C:membrane"/>
    <property type="evidence" value="ECO:0007669"/>
    <property type="project" value="GOC"/>
</dbReference>
<dbReference type="GO" id="GO:0019134">
    <property type="term" value="F:glucosamine-1-phosphate N-acetyltransferase activity"/>
    <property type="evidence" value="ECO:0007669"/>
    <property type="project" value="UniProtKB-UniRule"/>
</dbReference>
<dbReference type="GO" id="GO:0000287">
    <property type="term" value="F:magnesium ion binding"/>
    <property type="evidence" value="ECO:0007669"/>
    <property type="project" value="UniProtKB-UniRule"/>
</dbReference>
<dbReference type="GO" id="GO:0003977">
    <property type="term" value="F:UDP-N-acetylglucosamine diphosphorylase activity"/>
    <property type="evidence" value="ECO:0007669"/>
    <property type="project" value="UniProtKB-UniRule"/>
</dbReference>
<dbReference type="GO" id="GO:0000902">
    <property type="term" value="P:cell morphogenesis"/>
    <property type="evidence" value="ECO:0007669"/>
    <property type="project" value="UniProtKB-UniRule"/>
</dbReference>
<dbReference type="GO" id="GO:0071555">
    <property type="term" value="P:cell wall organization"/>
    <property type="evidence" value="ECO:0007669"/>
    <property type="project" value="UniProtKB-KW"/>
</dbReference>
<dbReference type="GO" id="GO:0009245">
    <property type="term" value="P:lipid A biosynthetic process"/>
    <property type="evidence" value="ECO:0007669"/>
    <property type="project" value="UniProtKB-UniRule"/>
</dbReference>
<dbReference type="GO" id="GO:0009252">
    <property type="term" value="P:peptidoglycan biosynthetic process"/>
    <property type="evidence" value="ECO:0007669"/>
    <property type="project" value="UniProtKB-UniRule"/>
</dbReference>
<dbReference type="GO" id="GO:0008360">
    <property type="term" value="P:regulation of cell shape"/>
    <property type="evidence" value="ECO:0007669"/>
    <property type="project" value="UniProtKB-KW"/>
</dbReference>
<dbReference type="GO" id="GO:0006048">
    <property type="term" value="P:UDP-N-acetylglucosamine biosynthetic process"/>
    <property type="evidence" value="ECO:0007669"/>
    <property type="project" value="UniProtKB-UniPathway"/>
</dbReference>
<dbReference type="CDD" id="cd02540">
    <property type="entry name" value="GT2_GlmU_N_bac"/>
    <property type="match status" value="1"/>
</dbReference>
<dbReference type="CDD" id="cd03353">
    <property type="entry name" value="LbH_GlmU_C"/>
    <property type="match status" value="1"/>
</dbReference>
<dbReference type="Gene3D" id="2.160.10.10">
    <property type="entry name" value="Hexapeptide repeat proteins"/>
    <property type="match status" value="1"/>
</dbReference>
<dbReference type="Gene3D" id="3.90.550.10">
    <property type="entry name" value="Spore Coat Polysaccharide Biosynthesis Protein SpsA, Chain A"/>
    <property type="match status" value="1"/>
</dbReference>
<dbReference type="HAMAP" id="MF_01631">
    <property type="entry name" value="GlmU"/>
    <property type="match status" value="1"/>
</dbReference>
<dbReference type="InterPro" id="IPR005882">
    <property type="entry name" value="Bifunctional_GlmU"/>
</dbReference>
<dbReference type="InterPro" id="IPR050065">
    <property type="entry name" value="GlmU-like"/>
</dbReference>
<dbReference type="InterPro" id="IPR038009">
    <property type="entry name" value="GlmU_C_LbH"/>
</dbReference>
<dbReference type="InterPro" id="IPR001451">
    <property type="entry name" value="Hexapep"/>
</dbReference>
<dbReference type="InterPro" id="IPR025877">
    <property type="entry name" value="MobA-like_NTP_Trfase"/>
</dbReference>
<dbReference type="InterPro" id="IPR029044">
    <property type="entry name" value="Nucleotide-diphossugar_trans"/>
</dbReference>
<dbReference type="InterPro" id="IPR011004">
    <property type="entry name" value="Trimer_LpxA-like_sf"/>
</dbReference>
<dbReference type="NCBIfam" id="TIGR01173">
    <property type="entry name" value="glmU"/>
    <property type="match status" value="1"/>
</dbReference>
<dbReference type="PANTHER" id="PTHR43584:SF3">
    <property type="entry name" value="BIFUNCTIONAL PROTEIN GLMU"/>
    <property type="match status" value="1"/>
</dbReference>
<dbReference type="PANTHER" id="PTHR43584">
    <property type="entry name" value="NUCLEOTIDYL TRANSFERASE"/>
    <property type="match status" value="1"/>
</dbReference>
<dbReference type="Pfam" id="PF00132">
    <property type="entry name" value="Hexapep"/>
    <property type="match status" value="2"/>
</dbReference>
<dbReference type="Pfam" id="PF12804">
    <property type="entry name" value="NTP_transf_3"/>
    <property type="match status" value="1"/>
</dbReference>
<dbReference type="SUPFAM" id="SSF53448">
    <property type="entry name" value="Nucleotide-diphospho-sugar transferases"/>
    <property type="match status" value="1"/>
</dbReference>
<dbReference type="SUPFAM" id="SSF51161">
    <property type="entry name" value="Trimeric LpxA-like enzymes"/>
    <property type="match status" value="1"/>
</dbReference>
<comment type="function">
    <text evidence="1">Catalyzes the last two sequential reactions in the de novo biosynthetic pathway for UDP-N-acetylglucosamine (UDP-GlcNAc). The C-terminal domain catalyzes the transfer of acetyl group from acetyl coenzyme A to glucosamine-1-phosphate (GlcN-1-P) to produce N-acetylglucosamine-1-phosphate (GlcNAc-1-P), which is converted into UDP-GlcNAc by the transfer of uridine 5-monophosphate (from uridine 5-triphosphate), a reaction catalyzed by the N-terminal domain.</text>
</comment>
<comment type="catalytic activity">
    <reaction evidence="1">
        <text>alpha-D-glucosamine 1-phosphate + acetyl-CoA = N-acetyl-alpha-D-glucosamine 1-phosphate + CoA + H(+)</text>
        <dbReference type="Rhea" id="RHEA:13725"/>
        <dbReference type="ChEBI" id="CHEBI:15378"/>
        <dbReference type="ChEBI" id="CHEBI:57287"/>
        <dbReference type="ChEBI" id="CHEBI:57288"/>
        <dbReference type="ChEBI" id="CHEBI:57776"/>
        <dbReference type="ChEBI" id="CHEBI:58516"/>
        <dbReference type="EC" id="2.3.1.157"/>
    </reaction>
</comment>
<comment type="catalytic activity">
    <reaction evidence="1">
        <text>N-acetyl-alpha-D-glucosamine 1-phosphate + UTP + H(+) = UDP-N-acetyl-alpha-D-glucosamine + diphosphate</text>
        <dbReference type="Rhea" id="RHEA:13509"/>
        <dbReference type="ChEBI" id="CHEBI:15378"/>
        <dbReference type="ChEBI" id="CHEBI:33019"/>
        <dbReference type="ChEBI" id="CHEBI:46398"/>
        <dbReference type="ChEBI" id="CHEBI:57705"/>
        <dbReference type="ChEBI" id="CHEBI:57776"/>
        <dbReference type="EC" id="2.7.7.23"/>
    </reaction>
</comment>
<comment type="cofactor">
    <cofactor evidence="1">
        <name>Mg(2+)</name>
        <dbReference type="ChEBI" id="CHEBI:18420"/>
    </cofactor>
    <text evidence="1">Binds 1 Mg(2+) ion per subunit.</text>
</comment>
<comment type="pathway">
    <text evidence="1">Nucleotide-sugar biosynthesis; UDP-N-acetyl-alpha-D-glucosamine biosynthesis; N-acetyl-alpha-D-glucosamine 1-phosphate from alpha-D-glucosamine 6-phosphate (route II): step 2/2.</text>
</comment>
<comment type="pathway">
    <text evidence="1">Nucleotide-sugar biosynthesis; UDP-N-acetyl-alpha-D-glucosamine biosynthesis; UDP-N-acetyl-alpha-D-glucosamine from N-acetyl-alpha-D-glucosamine 1-phosphate: step 1/1.</text>
</comment>
<comment type="pathway">
    <text evidence="1">Bacterial outer membrane biogenesis; LPS lipid A biosynthesis.</text>
</comment>
<comment type="subunit">
    <text evidence="1">Homotrimer.</text>
</comment>
<comment type="subcellular location">
    <subcellularLocation>
        <location evidence="1">Cytoplasm</location>
    </subcellularLocation>
</comment>
<comment type="similarity">
    <text evidence="1">In the N-terminal section; belongs to the N-acetylglucosamine-1-phosphate uridyltransferase family.</text>
</comment>
<comment type="similarity">
    <text evidence="1">In the C-terminal section; belongs to the transferase hexapeptide repeat family.</text>
</comment>
<proteinExistence type="inferred from homology"/>
<reference key="1">
    <citation type="journal article" date="2006" name="Genome Biol.">
        <title>Genomic analysis reveals that Pseudomonas aeruginosa virulence is combinatorial.</title>
        <authorList>
            <person name="Lee D.G."/>
            <person name="Urbach J.M."/>
            <person name="Wu G."/>
            <person name="Liberati N.T."/>
            <person name="Feinbaum R.L."/>
            <person name="Miyata S."/>
            <person name="Diggins L.T."/>
            <person name="He J."/>
            <person name="Saucier M."/>
            <person name="Deziel E."/>
            <person name="Friedman L."/>
            <person name="Li L."/>
            <person name="Grills G."/>
            <person name="Montgomery K."/>
            <person name="Kucherlapati R."/>
            <person name="Rahme L.G."/>
            <person name="Ausubel F.M."/>
        </authorList>
    </citation>
    <scope>NUCLEOTIDE SEQUENCE [LARGE SCALE GENOMIC DNA]</scope>
    <source>
        <strain>UCBPP-PA14</strain>
    </source>
</reference>
<keyword id="KW-0012">Acyltransferase</keyword>
<keyword id="KW-0133">Cell shape</keyword>
<keyword id="KW-0961">Cell wall biogenesis/degradation</keyword>
<keyword id="KW-0963">Cytoplasm</keyword>
<keyword id="KW-0460">Magnesium</keyword>
<keyword id="KW-0479">Metal-binding</keyword>
<keyword id="KW-0511">Multifunctional enzyme</keyword>
<keyword id="KW-0548">Nucleotidyltransferase</keyword>
<keyword id="KW-0573">Peptidoglycan synthesis</keyword>
<keyword id="KW-0677">Repeat</keyword>
<keyword id="KW-0808">Transferase</keyword>
<organism>
    <name type="scientific">Pseudomonas aeruginosa (strain UCBPP-PA14)</name>
    <dbReference type="NCBI Taxonomy" id="208963"/>
    <lineage>
        <taxon>Bacteria</taxon>
        <taxon>Pseudomonadati</taxon>
        <taxon>Pseudomonadota</taxon>
        <taxon>Gammaproteobacteria</taxon>
        <taxon>Pseudomonadales</taxon>
        <taxon>Pseudomonadaceae</taxon>
        <taxon>Pseudomonas</taxon>
    </lineage>
</organism>
<evidence type="ECO:0000255" key="1">
    <source>
        <dbReference type="HAMAP-Rule" id="MF_01631"/>
    </source>
</evidence>
<gene>
    <name evidence="1" type="primary">glmU</name>
    <name type="ordered locus">PA14_73220</name>
</gene>